<name>SPA3_ARATH</name>
<comment type="function">
    <text evidence="5 6 7">Repressor of photomorphogenesis in the light. Probably part of the COP1/SPA E3 ubiquitin-protein ligase complex.</text>
</comment>
<comment type="subunit">
    <text evidence="5 7">Interacts with COP1 and CO.</text>
</comment>
<comment type="interaction">
    <interactant intactId="EBI-626921">
        <id>Q9LJR3</id>
    </interactant>
    <interactant intactId="EBI-1112154">
        <id>O50055</id>
        <label>COL1</label>
    </interactant>
    <organismsDiffer>false</organismsDiffer>
    <experiments>7</experiments>
</comment>
<comment type="interaction">
    <interactant intactId="EBI-626921">
        <id>Q9LJR3</id>
    </interactant>
    <interactant intactId="EBI-301649">
        <id>P43254</id>
        <label>COP1</label>
    </interactant>
    <organismsDiffer>false</organismsDiffer>
    <experiments>7</experiments>
</comment>
<comment type="interaction">
    <interactant intactId="EBI-626921">
        <id>Q9LJR3</id>
    </interactant>
    <interactant intactId="EBI-626992">
        <id>Q9SYX2</id>
        <label>SPA1</label>
    </interactant>
    <organismsDiffer>false</organismsDiffer>
    <experiments>7</experiments>
</comment>
<comment type="interaction">
    <interactant intactId="EBI-626921">
        <id>Q9LJR3</id>
    </interactant>
    <interactant intactId="EBI-626921">
        <id>Q9LJR3</id>
        <label>SPA3</label>
    </interactant>
    <organismsDiffer>false</organismsDiffer>
    <experiments>2</experiments>
</comment>
<comment type="interaction">
    <interactant intactId="EBI-626921">
        <id>Q9LJR3</id>
    </interactant>
    <interactant intactId="EBI-626943">
        <id>Q94BM7</id>
        <label>SPA4</label>
    </interactant>
    <organismsDiffer>false</organismsDiffer>
    <experiments>6</experiments>
</comment>
<comment type="subcellular location">
    <subcellularLocation>
        <location evidence="1">Nucleus</location>
    </subcellularLocation>
</comment>
<comment type="alternative products">
    <event type="alternative splicing"/>
    <isoform>
        <id>Q9LJR3-1</id>
        <name>1</name>
        <sequence type="displayed"/>
    </isoform>
    <isoform>
        <id>Q9LJR3-2</id>
        <name>2</name>
        <sequence type="described" ref="VSP_042150 VSP_042151"/>
    </isoform>
</comment>
<comment type="induction">
    <text evidence="6 7">Up-regulated by red, far-red and blue light.</text>
</comment>
<comment type="domain">
    <text evidence="3">The protein kinase domain is predicted to be catalytically inactive. The DWD box is required for interaction with DDB1A (By similarity).</text>
</comment>
<comment type="sequence caution" evidence="9">
    <conflict type="erroneous gene model prediction">
        <sequence resource="EMBL-CDS" id="AEE75647"/>
    </conflict>
</comment>
<accession>Q9LJR3</accession>
<accession>F4IYP4</accession>
<accession>F4ZN82</accession>
<accession>F4ZN83</accession>
<keyword id="KW-0025">Alternative splicing</keyword>
<keyword id="KW-0175">Coiled coil</keyword>
<keyword id="KW-0547">Nucleotide-binding</keyword>
<keyword id="KW-0539">Nucleus</keyword>
<keyword id="KW-0607">Phytochrome signaling pathway</keyword>
<keyword id="KW-1185">Reference proteome</keyword>
<keyword id="KW-0677">Repeat</keyword>
<keyword id="KW-0808">Transferase</keyword>
<keyword id="KW-0833">Ubl conjugation pathway</keyword>
<keyword id="KW-0853">WD repeat</keyword>
<organism>
    <name type="scientific">Arabidopsis thaliana</name>
    <name type="common">Mouse-ear cress</name>
    <dbReference type="NCBI Taxonomy" id="3702"/>
    <lineage>
        <taxon>Eukaryota</taxon>
        <taxon>Viridiplantae</taxon>
        <taxon>Streptophyta</taxon>
        <taxon>Embryophyta</taxon>
        <taxon>Tracheophyta</taxon>
        <taxon>Spermatophyta</taxon>
        <taxon>Magnoliopsida</taxon>
        <taxon>eudicotyledons</taxon>
        <taxon>Gunneridae</taxon>
        <taxon>Pentapetalae</taxon>
        <taxon>rosids</taxon>
        <taxon>malvids</taxon>
        <taxon>Brassicales</taxon>
        <taxon>Brassicaceae</taxon>
        <taxon>Camelineae</taxon>
        <taxon>Arabidopsis</taxon>
    </lineage>
</organism>
<protein>
    <recommendedName>
        <fullName>Protein SPA1-RELATED 3</fullName>
    </recommendedName>
</protein>
<sequence>MEGSSNSNSRGFNTSGVSDRNTEFLPVERLTTRSKPSSHVDEYVRSLFGSTSTHKSGEDDSLGIDPFVRSLEWGDVSLRQWLDKPERSVDVFECLHVFRQIVEIVNAAHSQGIVVHNVRPSCFVMSSFNHVSFIESASCSDSGSDSLEDGPISQKEIGSSRREEAVSKAIAIEEKGVYNKLLERKIEKLEEEKTQPFPMKHILAMETSWYTSPEEDFGSSSTCASDVYRLGVLLFELFCPVPSREEKSRTMSSLRHRVLPPQILLKCPKEASFCLWLLHPEPTCRPSMSDLLQSEFITEPRDNLEEREAAIELRDRIEEQESLLEFLLLIQQRKQESAYRLQDTVSLLSSDIEQVVKRQLILKKRGSSLSDFSKDDHQYTSGQPLMSFQANEEPSAFLASRKRVRQGILALENGVEVDEESQGSTLLESSRLMRNFKKLESVYFLTRRRQMKAAASGKSLTRHSPLSSENGRGSMIVSEKSSVSNPVAPKAFFNNDSRQGGWIDPFLEGLCRYLSFSQLRVKADLKQGDLLNSSNLVCALAFDREGELFATAGVNKKIKIFECNSIVNDNRDIHYPVVELAGRSKLSSLCWNSYIKSQIASSNFDGVVQIWDVARSQLVTEMKEHKKRVWSIDISSADPTLLASGSDDGTVKLWSINQGVSIGTIKTKANVCCVQFPSDSGRSLAFGSADHKVYYYDLRNPKIPLCTMIGHSKTVSYVKFVDSSTLVSSSTDNTLKLWDLSMSASGINESPLHSFTGHTNLKNFVGLSVSDGYIATGSETNEVFVYHKAFPMPVMSYMFNNTDSMSGLEVDDASQFISSICWRGQSSTLVAANSNGNIKILEMMT</sequence>
<reference key="1">
    <citation type="journal article" date="2011" name="Genes Dev.">
        <title>Arabidopsis cryptochrome 1 interacts with SPA1 to suppress COP1 activity in response to blue light.</title>
        <authorList>
            <person name="Liu B."/>
            <person name="Zuo Z."/>
            <person name="Liu H."/>
            <person name="Liu X."/>
            <person name="Lin C."/>
        </authorList>
    </citation>
    <scope>NUCLEOTIDE SEQUENCE [MRNA] (ISOFORMS 1 AND 2)</scope>
    <scope>ALTERNATIVE SPLICING</scope>
</reference>
<reference key="2">
    <citation type="journal article" date="2000" name="DNA Res.">
        <title>Structural analysis of Arabidopsis thaliana chromosome 3. II. Sequence features of the 4,251,695 bp regions covered by 90 P1, TAC and BAC clones.</title>
        <authorList>
            <person name="Kaneko T."/>
            <person name="Katoh T."/>
            <person name="Sato S."/>
            <person name="Nakamura Y."/>
            <person name="Asamizu E."/>
            <person name="Tabata S."/>
        </authorList>
    </citation>
    <scope>NUCLEOTIDE SEQUENCE [LARGE SCALE GENOMIC DNA]</scope>
    <source>
        <strain>cv. Columbia</strain>
    </source>
</reference>
<reference key="3">
    <citation type="journal article" date="2017" name="Plant J.">
        <title>Araport11: a complete reannotation of the Arabidopsis thaliana reference genome.</title>
        <authorList>
            <person name="Cheng C.Y."/>
            <person name="Krishnakumar V."/>
            <person name="Chan A.P."/>
            <person name="Thibaud-Nissen F."/>
            <person name="Schobel S."/>
            <person name="Town C.D."/>
        </authorList>
    </citation>
    <scope>GENOME REANNOTATION</scope>
    <source>
        <strain>cv. Columbia</strain>
    </source>
</reference>
<reference key="4">
    <citation type="journal article" date="2003" name="Plant J.">
        <title>The SPA1-like proteins SPA3 and SPA4 repress photomorphogenesis in the light.</title>
        <authorList>
            <person name="Laubinger S."/>
            <person name="Hoecker U."/>
        </authorList>
    </citation>
    <scope>FUNCTION</scope>
    <scope>INTERACTION WITH COP1</scope>
    <scope>GENE FAMILY</scope>
    <scope>NOMENCLATURE</scope>
</reference>
<reference key="5">
    <citation type="journal article" date="2004" name="Plant Cell">
        <title>The SPA quartet: a family of WD-repeat proteins with a central role in suppression of photomorphogenesis in Arabidopsis.</title>
        <authorList>
            <person name="Laubinger S."/>
            <person name="Fittinghoff K."/>
            <person name="Hoecker U."/>
        </authorList>
    </citation>
    <scope>GENE FAMILY</scope>
    <scope>NOMENCLATURE</scope>
</reference>
<reference key="6">
    <citation type="journal article" date="2006" name="Plant J.">
        <title>Functional and expression analysis of Arabidopsis SPA genes during seedling photomorphogenesis and adult growth.</title>
        <authorList>
            <person name="Fittinghoff K."/>
            <person name="Laubinger S."/>
            <person name="Nixdorf M."/>
            <person name="Fackendahl P."/>
            <person name="Baumgardt R.-L."/>
            <person name="Batschauer A."/>
            <person name="Hoecker U."/>
        </authorList>
    </citation>
    <scope>FUNCTION</scope>
    <scope>INDUCTION BY LIGHT</scope>
</reference>
<reference key="7">
    <citation type="journal article" date="2006" name="Development">
        <title>Arabidopsis SPA proteins regulate photoperiodic flowering and interact with the floral inducer CONSTANS to regulate its stability.</title>
        <authorList>
            <person name="Laubinger S."/>
            <person name="Marchal V."/>
            <person name="Le Gourrierec J."/>
            <person name="Wenkel S."/>
            <person name="Adrian J."/>
            <person name="Jang S."/>
            <person name="Kulajta C."/>
            <person name="Braun H."/>
            <person name="Coupland G."/>
            <person name="Hoecker U."/>
        </authorList>
    </citation>
    <scope>FUNCTION</scope>
    <scope>INTERACTION WITH CO</scope>
    <scope>INDUCTION</scope>
</reference>
<reference key="8">
    <citation type="journal article" date="2008" name="Plant Cell">
        <title>Characterization of Arabidopsis and rice DWD proteins and their roles as substrate receptors for CUL4-RING E3 ubiquitin ligases.</title>
        <authorList>
            <person name="Lee J.H."/>
            <person name="Terzaghi W."/>
            <person name="Gusmaroli G."/>
            <person name="Charron J.B."/>
            <person name="Yoon H.J."/>
            <person name="Chen H."/>
            <person name="He Y.J."/>
            <person name="Xiong Y."/>
            <person name="Deng X.W."/>
        </authorList>
    </citation>
    <scope>DWD MOTIF</scope>
</reference>
<dbReference type="EMBL" id="HQ228994">
    <property type="protein sequence ID" value="AEC32932.1"/>
    <property type="molecule type" value="mRNA"/>
</dbReference>
<dbReference type="EMBL" id="HQ228995">
    <property type="protein sequence ID" value="AEC32933.1"/>
    <property type="molecule type" value="mRNA"/>
</dbReference>
<dbReference type="EMBL" id="AP000413">
    <property type="protein sequence ID" value="BAB02165.1"/>
    <property type="molecule type" value="Genomic_DNA"/>
</dbReference>
<dbReference type="EMBL" id="CP002686">
    <property type="protein sequence ID" value="AEE75647.1"/>
    <property type="status" value="ALT_SEQ"/>
    <property type="molecule type" value="Genomic_DNA"/>
</dbReference>
<dbReference type="EMBL" id="CP002686">
    <property type="protein sequence ID" value="ANM65673.1"/>
    <property type="molecule type" value="Genomic_DNA"/>
</dbReference>
<dbReference type="EMBL" id="CP002686">
    <property type="protein sequence ID" value="ANM65674.1"/>
    <property type="molecule type" value="Genomic_DNA"/>
</dbReference>
<dbReference type="RefSeq" id="NP_001327623.1">
    <molecule id="Q9LJR3-2"/>
    <property type="nucleotide sequence ID" value="NM_001338161.1"/>
</dbReference>
<dbReference type="RefSeq" id="NP_001327624.1">
    <molecule id="Q9LJR3-1"/>
    <property type="nucleotide sequence ID" value="NM_001338162.1"/>
</dbReference>
<dbReference type="RefSeq" id="NP_683567.1">
    <property type="nucleotide sequence ID" value="NM_148725.4"/>
</dbReference>
<dbReference type="SMR" id="Q9LJR3"/>
<dbReference type="BioGRID" id="6101">
    <property type="interactions" value="12"/>
</dbReference>
<dbReference type="FunCoup" id="Q9LJR3">
    <property type="interactions" value="693"/>
</dbReference>
<dbReference type="IntAct" id="Q9LJR3">
    <property type="interactions" value="4"/>
</dbReference>
<dbReference type="STRING" id="3702.Q9LJR3"/>
<dbReference type="iPTMnet" id="Q9LJR3"/>
<dbReference type="PaxDb" id="3702-AT3G15354.1"/>
<dbReference type="ProteomicsDB" id="245333">
    <molecule id="Q9LJR3-1"/>
</dbReference>
<dbReference type="EnsemblPlants" id="AT3G15354.2">
    <molecule id="Q9LJR3-2"/>
    <property type="protein sequence ID" value="AT3G15354.2"/>
    <property type="gene ID" value="AT3G15354"/>
</dbReference>
<dbReference type="EnsemblPlants" id="AT3G15354.3">
    <molecule id="Q9LJR3-1"/>
    <property type="protein sequence ID" value="AT3G15354.3"/>
    <property type="gene ID" value="AT3G15354"/>
</dbReference>
<dbReference type="GeneID" id="820767"/>
<dbReference type="Gramene" id="AT3G15354.2">
    <molecule id="Q9LJR3-2"/>
    <property type="protein sequence ID" value="AT3G15354.2"/>
    <property type="gene ID" value="AT3G15354"/>
</dbReference>
<dbReference type="Gramene" id="AT3G15354.3">
    <molecule id="Q9LJR3-1"/>
    <property type="protein sequence ID" value="AT3G15354.3"/>
    <property type="gene ID" value="AT3G15354"/>
</dbReference>
<dbReference type="KEGG" id="ath:AT3G15354"/>
<dbReference type="Araport" id="AT3G15354"/>
<dbReference type="TAIR" id="AT3G15354">
    <property type="gene designation" value="SPA3"/>
</dbReference>
<dbReference type="eggNOG" id="KOG1033">
    <property type="taxonomic scope" value="Eukaryota"/>
</dbReference>
<dbReference type="HOGENOM" id="CLU_006994_1_1_1"/>
<dbReference type="InParanoid" id="Q9LJR3"/>
<dbReference type="OMA" id="SACWNSY"/>
<dbReference type="PhylomeDB" id="Q9LJR3"/>
<dbReference type="PRO" id="PR:Q9LJR3"/>
<dbReference type="Proteomes" id="UP000006548">
    <property type="component" value="Chromosome 3"/>
</dbReference>
<dbReference type="ExpressionAtlas" id="Q9LJR3">
    <property type="expression patterns" value="baseline and differential"/>
</dbReference>
<dbReference type="GO" id="GO:0005634">
    <property type="term" value="C:nucleus"/>
    <property type="evidence" value="ECO:0007669"/>
    <property type="project" value="UniProtKB-SubCell"/>
</dbReference>
<dbReference type="GO" id="GO:0005524">
    <property type="term" value="F:ATP binding"/>
    <property type="evidence" value="ECO:0007669"/>
    <property type="project" value="InterPro"/>
</dbReference>
<dbReference type="GO" id="GO:0042802">
    <property type="term" value="F:identical protein binding"/>
    <property type="evidence" value="ECO:0000353"/>
    <property type="project" value="IntAct"/>
</dbReference>
<dbReference type="GO" id="GO:0004672">
    <property type="term" value="F:protein kinase activity"/>
    <property type="evidence" value="ECO:0007669"/>
    <property type="project" value="InterPro"/>
</dbReference>
<dbReference type="GO" id="GO:0009640">
    <property type="term" value="P:photomorphogenesis"/>
    <property type="evidence" value="ECO:0007669"/>
    <property type="project" value="InterPro"/>
</dbReference>
<dbReference type="GO" id="GO:0009585">
    <property type="term" value="P:red, far-red light phototransduction"/>
    <property type="evidence" value="ECO:0007669"/>
    <property type="project" value="UniProtKB-KW"/>
</dbReference>
<dbReference type="CDD" id="cd00200">
    <property type="entry name" value="WD40"/>
    <property type="match status" value="1"/>
</dbReference>
<dbReference type="FunFam" id="2.130.10.10:FF:000090">
    <property type="entry name" value="E3 ubiquitin-protein ligase RFWD2 isoform X1"/>
    <property type="match status" value="1"/>
</dbReference>
<dbReference type="Gene3D" id="1.10.510.10">
    <property type="entry name" value="Transferase(Phosphotransferase) domain 1"/>
    <property type="match status" value="1"/>
</dbReference>
<dbReference type="Gene3D" id="2.130.10.10">
    <property type="entry name" value="YVTN repeat-like/Quinoprotein amine dehydrogenase"/>
    <property type="match status" value="1"/>
</dbReference>
<dbReference type="InterPro" id="IPR020472">
    <property type="entry name" value="G-protein_beta_WD-40_rep"/>
</dbReference>
<dbReference type="InterPro" id="IPR011009">
    <property type="entry name" value="Kinase-like_dom_sf"/>
</dbReference>
<dbReference type="InterPro" id="IPR000719">
    <property type="entry name" value="Prot_kinase_dom"/>
</dbReference>
<dbReference type="InterPro" id="IPR044630">
    <property type="entry name" value="SPA1/2/3/4"/>
</dbReference>
<dbReference type="InterPro" id="IPR015943">
    <property type="entry name" value="WD40/YVTN_repeat-like_dom_sf"/>
</dbReference>
<dbReference type="InterPro" id="IPR019775">
    <property type="entry name" value="WD40_repeat_CS"/>
</dbReference>
<dbReference type="InterPro" id="IPR036322">
    <property type="entry name" value="WD40_repeat_dom_sf"/>
</dbReference>
<dbReference type="InterPro" id="IPR001680">
    <property type="entry name" value="WD40_rpt"/>
</dbReference>
<dbReference type="PANTHER" id="PTHR44218">
    <property type="entry name" value="PROTEIN SPA1-RELATED 2"/>
    <property type="match status" value="1"/>
</dbReference>
<dbReference type="PANTHER" id="PTHR44218:SF1">
    <property type="entry name" value="PROTEIN SPA1-RELATED 3"/>
    <property type="match status" value="1"/>
</dbReference>
<dbReference type="Pfam" id="PF00400">
    <property type="entry name" value="WD40"/>
    <property type="match status" value="3"/>
</dbReference>
<dbReference type="PRINTS" id="PR00320">
    <property type="entry name" value="GPROTEINBRPT"/>
</dbReference>
<dbReference type="SMART" id="SM00220">
    <property type="entry name" value="S_TKc"/>
    <property type="match status" value="1"/>
</dbReference>
<dbReference type="SMART" id="SM00320">
    <property type="entry name" value="WD40"/>
    <property type="match status" value="7"/>
</dbReference>
<dbReference type="SUPFAM" id="SSF56112">
    <property type="entry name" value="Protein kinase-like (PK-like)"/>
    <property type="match status" value="1"/>
</dbReference>
<dbReference type="SUPFAM" id="SSF50978">
    <property type="entry name" value="WD40 repeat-like"/>
    <property type="match status" value="1"/>
</dbReference>
<dbReference type="PROSITE" id="PS50011">
    <property type="entry name" value="PROTEIN_KINASE_DOM"/>
    <property type="match status" value="1"/>
</dbReference>
<dbReference type="PROSITE" id="PS00678">
    <property type="entry name" value="WD_REPEATS_1"/>
    <property type="match status" value="2"/>
</dbReference>
<dbReference type="PROSITE" id="PS50082">
    <property type="entry name" value="WD_REPEATS_2"/>
    <property type="match status" value="3"/>
</dbReference>
<dbReference type="PROSITE" id="PS50294">
    <property type="entry name" value="WD_REPEATS_REGION"/>
    <property type="match status" value="1"/>
</dbReference>
<feature type="chain" id="PRO_0000363493" description="Protein SPA1-RELATED 3">
    <location>
        <begin position="1"/>
        <end position="845"/>
    </location>
</feature>
<feature type="domain" description="Protein kinase" evidence="3">
    <location>
        <begin position="1"/>
        <end position="297"/>
    </location>
</feature>
<feature type="repeat" description="WD 1">
    <location>
        <begin position="532"/>
        <end position="571"/>
    </location>
</feature>
<feature type="repeat" description="WD 2">
    <location>
        <begin position="581"/>
        <end position="621"/>
    </location>
</feature>
<feature type="repeat" description="WD 3">
    <location>
        <begin position="624"/>
        <end position="664"/>
    </location>
</feature>
<feature type="repeat" description="WD 4">
    <location>
        <begin position="666"/>
        <end position="706"/>
    </location>
</feature>
<feature type="repeat" description="WD 5">
    <location>
        <begin position="710"/>
        <end position="748"/>
    </location>
</feature>
<feature type="repeat" description="WD 6">
    <location>
        <begin position="757"/>
        <end position="796"/>
    </location>
</feature>
<feature type="repeat" description="WD 7">
    <location>
        <begin position="812"/>
        <end position="845"/>
    </location>
</feature>
<feature type="region of interest" description="Disordered" evidence="4">
    <location>
        <begin position="1"/>
        <end position="33"/>
    </location>
</feature>
<feature type="region of interest" description="Disordered" evidence="4">
    <location>
        <begin position="139"/>
        <end position="158"/>
    </location>
</feature>
<feature type="coiled-coil region" evidence="2">
    <location>
        <begin position="301"/>
        <end position="329"/>
    </location>
</feature>
<feature type="short sequence motif" description="DWD box">
    <location>
        <begin position="685"/>
        <end position="699"/>
    </location>
</feature>
<feature type="compositionally biased region" description="Polar residues" evidence="4">
    <location>
        <begin position="1"/>
        <end position="19"/>
    </location>
</feature>
<feature type="splice variant" id="VSP_042150" description="In isoform 2." evidence="8">
    <original>GVSI</original>
    <variation>AILI</variation>
    <location>
        <begin position="659"/>
        <end position="662"/>
    </location>
</feature>
<feature type="splice variant" id="VSP_042151" description="In isoform 2." evidence="8">
    <location>
        <begin position="663"/>
        <end position="845"/>
    </location>
</feature>
<evidence type="ECO:0000250" key="1"/>
<evidence type="ECO:0000255" key="2"/>
<evidence type="ECO:0000255" key="3">
    <source>
        <dbReference type="PROSITE-ProRule" id="PRU00159"/>
    </source>
</evidence>
<evidence type="ECO:0000256" key="4">
    <source>
        <dbReference type="SAM" id="MobiDB-lite"/>
    </source>
</evidence>
<evidence type="ECO:0000269" key="5">
    <source>
    </source>
</evidence>
<evidence type="ECO:0000269" key="6">
    <source>
    </source>
</evidence>
<evidence type="ECO:0000269" key="7">
    <source>
    </source>
</evidence>
<evidence type="ECO:0000303" key="8">
    <source>
    </source>
</evidence>
<evidence type="ECO:0000305" key="9"/>
<proteinExistence type="evidence at protein level"/>
<gene>
    <name type="primary">SPA3</name>
    <name type="ordered locus">At3g15354</name>
    <name type="ORF">K7L4.16</name>
</gene>